<keyword id="KW-0496">Mitochondrion</keyword>
<keyword id="KW-0520">NAD</keyword>
<keyword id="KW-0521">NADP</keyword>
<keyword id="KW-0560">Oxidoreductase</keyword>
<keyword id="KW-0809">Transit peptide</keyword>
<sequence length="265" mass="27191">MASVKKLAGKVAIVTGGASGIGEVTARLFAERGARAVVIADMQPEKGGTVAESIGGRRCSYVHCDITDEQQVRSVVDWTAATYGGVDVMFCNAGTASATAQTVLDLDLAQFDRVMRVNARGTAACVKQAARKMVELGRGGAIICTASATVHHAGPNLTDYIMSKCGVLGLVRSASLQLGVHGIRVNSVSPTALATPLTATIGLRTAADVESFYGQVTSLKGVAITAEHVAEAVAFLASDEAAFVTGHDLAVDGGLQCLPFVAVAK</sequence>
<feature type="transit peptide" description="Mitochondrion" evidence="2">
    <location>
        <begin position="1"/>
        <end position="30"/>
    </location>
</feature>
<feature type="chain" id="PRO_0000418415" description="(-)-isopiperitenol/(-)-carveol dehydrogenase, mitochondrial">
    <location>
        <begin position="31"/>
        <end position="265"/>
    </location>
</feature>
<feature type="active site" description="Proton acceptor" evidence="1">
    <location>
        <position position="160"/>
    </location>
</feature>
<feature type="binding site" evidence="1">
    <location>
        <begin position="13"/>
        <end position="38"/>
    </location>
    <ligand>
        <name>NAD(+)</name>
        <dbReference type="ChEBI" id="CHEBI:57540"/>
    </ligand>
</feature>
<feature type="binding site" evidence="1">
    <location>
        <position position="147"/>
    </location>
    <ligand>
        <name>substrate</name>
    </ligand>
</feature>
<evidence type="ECO:0000250" key="1"/>
<evidence type="ECO:0000255" key="2"/>
<evidence type="ECO:0000269" key="3">
    <source>
    </source>
</evidence>
<evidence type="ECO:0000269" key="4">
    <source>
    </source>
</evidence>
<evidence type="ECO:0000305" key="5"/>
<evidence type="ECO:0000305" key="6">
    <source>
    </source>
</evidence>
<comment type="function">
    <text>Involved in the biosynthesis of menthol and related monoterpenes in leaves. Can use (-)-trans-carveol and, with a lower relative velocity, (-)-trans-isopiperitenol, (+)-neomenthol, (+)-neoisomenthol and (-)-cis-isopiperitenol as substrates, but not (-)-cis-carvenol, (-)-menthol, (+)-isomenthol, 7-hydroxy-limonene, (-)-isopiperitenone or (-)-carvone.</text>
</comment>
<comment type="catalytic activity">
    <reaction evidence="4">
        <text>(1S,6R)-isopiperitenol + NAD(+) = (6R)-isopiperitenone + NADH + H(+)</text>
        <dbReference type="Rhea" id="RHEA:20860"/>
        <dbReference type="ChEBI" id="CHEBI:15378"/>
        <dbReference type="ChEBI" id="CHEBI:15406"/>
        <dbReference type="ChEBI" id="CHEBI:15408"/>
        <dbReference type="ChEBI" id="CHEBI:57540"/>
        <dbReference type="ChEBI" id="CHEBI:57945"/>
        <dbReference type="EC" id="1.1.1.223"/>
    </reaction>
</comment>
<comment type="catalytic activity">
    <reaction evidence="4">
        <text>(1S,5R)-carveol + NADP(+) = (R)-carvone + NADPH + H(+)</text>
        <dbReference type="Rhea" id="RHEA:13629"/>
        <dbReference type="ChEBI" id="CHEBI:15378"/>
        <dbReference type="ChEBI" id="CHEBI:15389"/>
        <dbReference type="ChEBI" id="CHEBI:15400"/>
        <dbReference type="ChEBI" id="CHEBI:57783"/>
        <dbReference type="ChEBI" id="CHEBI:58349"/>
        <dbReference type="EC" id="1.1.1.243"/>
    </reaction>
</comment>
<comment type="biophysicochemical properties">
    <kinetics>
        <KM evidence="4">1.8 uM for (-)-trans-carveol (at pH 7.5)</KM>
        <KM evidence="4">72 uM for (-)-trans-isopiperitenol (at pH 7.5)</KM>
        <KM evidence="4">410 uM for NAD(+) (at pH 7.5)</KM>
        <text>kcat is 0.02 sec(-1) with (-)-trans-carveol as substrate (at pH 7.5), kcat is 0.06 sec(-1) with (-)-trans-carveol as substrate (at pH 10), kcat is 0.002 sec(-1) with (-)-trans-isopiperitenol as substrate (at pH 7.5).</text>
    </kinetics>
    <phDependence>
        <text evidence="4">Optimum pH is 10.</text>
    </phDependence>
</comment>
<comment type="subunit">
    <text evidence="6">Homodimer and homotetramer.</text>
</comment>
<comment type="subcellular location">
    <subcellularLocation>
        <location evidence="3">Mitochondrion</location>
    </subcellularLocation>
</comment>
<comment type="tissue specificity">
    <text>Peltate glandular trichomes.</text>
</comment>
<comment type="miscellaneous">
    <text>Can use both NAD(+) or NADP(+) as cofactor.</text>
</comment>
<comment type="similarity">
    <text evidence="5">Belongs to the short-chain dehydrogenases/reductases (SDR) family.</text>
</comment>
<accession>Q5C9I9</accession>
<organism>
    <name type="scientific">Mentha piperita</name>
    <name type="common">Peppermint</name>
    <name type="synonym">Mentha aquatica x Mentha spicata</name>
    <dbReference type="NCBI Taxonomy" id="34256"/>
    <lineage>
        <taxon>Eukaryota</taxon>
        <taxon>Viridiplantae</taxon>
        <taxon>Streptophyta</taxon>
        <taxon>Embryophyta</taxon>
        <taxon>Tracheophyta</taxon>
        <taxon>Spermatophyta</taxon>
        <taxon>Magnoliopsida</taxon>
        <taxon>eudicotyledons</taxon>
        <taxon>Gunneridae</taxon>
        <taxon>Pentapetalae</taxon>
        <taxon>asterids</taxon>
        <taxon>lamiids</taxon>
        <taxon>Lamiales</taxon>
        <taxon>Lamiaceae</taxon>
        <taxon>Nepetoideae</taxon>
        <taxon>Mentheae</taxon>
        <taxon>Menthinae</taxon>
        <taxon>Mentha</taxon>
    </lineage>
</organism>
<dbReference type="EC" id="1.1.1.223"/>
<dbReference type="EC" id="1.1.1.243"/>
<dbReference type="EMBL" id="AY641428">
    <property type="protein sequence ID" value="AAU20370.1"/>
    <property type="molecule type" value="mRNA"/>
</dbReference>
<dbReference type="SMR" id="Q5C9I9"/>
<dbReference type="KEGG" id="ag:AAU20370"/>
<dbReference type="BRENDA" id="1.1.1.223">
    <property type="organism ID" value="3222"/>
</dbReference>
<dbReference type="GO" id="GO:0005739">
    <property type="term" value="C:mitochondrion"/>
    <property type="evidence" value="ECO:0007669"/>
    <property type="project" value="UniProtKB-SubCell"/>
</dbReference>
<dbReference type="GO" id="GO:0018459">
    <property type="term" value="F:carveol dehydrogenase activity"/>
    <property type="evidence" value="ECO:0000314"/>
    <property type="project" value="UniProtKB"/>
</dbReference>
<dbReference type="GO" id="GO:0018458">
    <property type="term" value="F:isopiperitenol dehydrogenase activity"/>
    <property type="evidence" value="ECO:0000314"/>
    <property type="project" value="UniProtKB"/>
</dbReference>
<dbReference type="GO" id="GO:0000166">
    <property type="term" value="F:nucleotide binding"/>
    <property type="evidence" value="ECO:0000314"/>
    <property type="project" value="UniProtKB"/>
</dbReference>
<dbReference type="GO" id="GO:0031525">
    <property type="term" value="P:menthol biosynthetic process"/>
    <property type="evidence" value="ECO:0000314"/>
    <property type="project" value="UniProtKB"/>
</dbReference>
<dbReference type="FunFam" id="3.40.50.720:FF:000084">
    <property type="entry name" value="Short-chain dehydrogenase reductase"/>
    <property type="match status" value="1"/>
</dbReference>
<dbReference type="Gene3D" id="3.40.50.720">
    <property type="entry name" value="NAD(P)-binding Rossmann-like Domain"/>
    <property type="match status" value="1"/>
</dbReference>
<dbReference type="InterPro" id="IPR036291">
    <property type="entry name" value="NAD(P)-bd_dom_sf"/>
</dbReference>
<dbReference type="InterPro" id="IPR002347">
    <property type="entry name" value="SDR_fam"/>
</dbReference>
<dbReference type="PANTHER" id="PTHR42820">
    <property type="entry name" value="SHORT-CHAIN DEHYDROGENASE REDUCTASE"/>
    <property type="match status" value="1"/>
</dbReference>
<dbReference type="PANTHER" id="PTHR42820:SF21">
    <property type="entry name" value="SHORT-CHAIN DEHYDROGENASE REDUCTASE 3B-LIKE"/>
    <property type="match status" value="1"/>
</dbReference>
<dbReference type="Pfam" id="PF13561">
    <property type="entry name" value="adh_short_C2"/>
    <property type="match status" value="1"/>
</dbReference>
<dbReference type="PRINTS" id="PR00081">
    <property type="entry name" value="GDHRDH"/>
</dbReference>
<dbReference type="SUPFAM" id="SSF51735">
    <property type="entry name" value="NAD(P)-binding Rossmann-fold domains"/>
    <property type="match status" value="1"/>
</dbReference>
<reference key="1">
    <citation type="journal article" date="2005" name="Plant Physiol.">
        <title>Monoterpene metabolism. Cloning, expression, and characterization of (-)-isopiperitenol/(-)-carveol dehydrogenase of peppermint and spearmint.</title>
        <authorList>
            <person name="Ringer K.L."/>
            <person name="Davis E.M."/>
            <person name="Croteau R."/>
        </authorList>
    </citation>
    <scope>NUCLEOTIDE SEQUENCE [MRNA]</scope>
    <scope>CATALYTIC ACTIVITY</scope>
    <scope>BIOPHYSICOCHEMICAL PROPERTIES</scope>
    <scope>SUBUNIT</scope>
    <source>
        <tissue>Oil gland</tissue>
    </source>
</reference>
<reference key="2">
    <citation type="journal article" date="2004" name="Plant Physiol.">
        <title>Organization of monoterpene biosynthesis in Mentha. Immunocytochemical localizations of geranyl diphosphate synthase, limonene-6-hydroxylase, isopiperitenol dehydrogenase, and pulegone reductase.</title>
        <authorList>
            <person name="Turner G.W."/>
            <person name="Croteau R."/>
        </authorList>
    </citation>
    <scope>SUBCELLULAR LOCATION</scope>
</reference>
<protein>
    <recommendedName>
        <fullName>(-)-isopiperitenol/(-)-carveol dehydrogenase, mitochondrial</fullName>
        <ecNumber>1.1.1.223</ecNumber>
        <ecNumber>1.1.1.243</ecNumber>
    </recommendedName>
</protein>
<name>ISPD_MENPI</name>
<proteinExistence type="evidence at protein level"/>